<sequence length="278" mass="31083">MQVRQSIHSDHAKQLDTAGLRREFLIEKIFAADDYTMTYSHIDRIIVGGILPVSKAVSIGNEVGKQLGVSYFLERRELGAINIGGPGLIVVDGQTYDIGNEEALYVGKGAKEVKFSSIDRANPAKFYYNSAPAHTTYPNKKITLAEASPQTLGDDATSNRRTINKYIVPDVLPTCQLSMGLTKLAPGSLWNTMPCHTHERRMEVYFYFDMDEETAVFHMMGQPQETRHLLVHNEQAVISPSWSIHSGVGTKRYTFIWGMVGENQVFGDMDHIAVSELR</sequence>
<keyword id="KW-0413">Isomerase</keyword>
<keyword id="KW-0479">Metal-binding</keyword>
<keyword id="KW-1185">Reference proteome</keyword>
<keyword id="KW-0862">Zinc</keyword>
<proteinExistence type="inferred from homology"/>
<dbReference type="EC" id="5.3.1.17" evidence="1"/>
<dbReference type="EMBL" id="AL590842">
    <property type="protein sequence ID" value="CAL20368.1"/>
    <property type="molecule type" value="Genomic_DNA"/>
</dbReference>
<dbReference type="EMBL" id="AE009952">
    <property type="protein sequence ID" value="AAM85454.1"/>
    <property type="molecule type" value="Genomic_DNA"/>
</dbReference>
<dbReference type="EMBL" id="AE017042">
    <property type="protein sequence ID" value="AAS61978.1"/>
    <property type="molecule type" value="Genomic_DNA"/>
</dbReference>
<dbReference type="PIR" id="AE0210">
    <property type="entry name" value="AE0210"/>
</dbReference>
<dbReference type="RefSeq" id="WP_002210829.1">
    <property type="nucleotide sequence ID" value="NZ_WUCL01000041.1"/>
</dbReference>
<dbReference type="RefSeq" id="YP_002346728.1">
    <property type="nucleotide sequence ID" value="NC_003143.1"/>
</dbReference>
<dbReference type="SMR" id="Q8ZFH8"/>
<dbReference type="STRING" id="214092.YPO1725"/>
<dbReference type="PaxDb" id="214092-YPO1725"/>
<dbReference type="DNASU" id="1146834"/>
<dbReference type="EnsemblBacteria" id="AAS61978">
    <property type="protein sequence ID" value="AAS61978"/>
    <property type="gene ID" value="YP_1750"/>
</dbReference>
<dbReference type="GeneID" id="57976853"/>
<dbReference type="KEGG" id="ype:YPO1725"/>
<dbReference type="KEGG" id="ypk:y1887"/>
<dbReference type="KEGG" id="ypm:YP_1750"/>
<dbReference type="PATRIC" id="fig|214092.21.peg.2076"/>
<dbReference type="eggNOG" id="COG3717">
    <property type="taxonomic scope" value="Bacteria"/>
</dbReference>
<dbReference type="HOGENOM" id="CLU_062609_0_0_6"/>
<dbReference type="OMA" id="CHTHDRR"/>
<dbReference type="OrthoDB" id="9770644at2"/>
<dbReference type="UniPathway" id="UPA00545">
    <property type="reaction ID" value="UER00826"/>
</dbReference>
<dbReference type="Proteomes" id="UP000000815">
    <property type="component" value="Chromosome"/>
</dbReference>
<dbReference type="Proteomes" id="UP000001019">
    <property type="component" value="Chromosome"/>
</dbReference>
<dbReference type="Proteomes" id="UP000002490">
    <property type="component" value="Chromosome"/>
</dbReference>
<dbReference type="GO" id="GO:0008697">
    <property type="term" value="F:4-deoxy-L-threo-5-hexosulose-uronate ketol-isomerase activity"/>
    <property type="evidence" value="ECO:0000318"/>
    <property type="project" value="GO_Central"/>
</dbReference>
<dbReference type="GO" id="GO:0046872">
    <property type="term" value="F:metal ion binding"/>
    <property type="evidence" value="ECO:0000318"/>
    <property type="project" value="GO_Central"/>
</dbReference>
<dbReference type="GO" id="GO:0008270">
    <property type="term" value="F:zinc ion binding"/>
    <property type="evidence" value="ECO:0007669"/>
    <property type="project" value="UniProtKB-UniRule"/>
</dbReference>
<dbReference type="GO" id="GO:0019698">
    <property type="term" value="P:D-galacturonate catabolic process"/>
    <property type="evidence" value="ECO:0000318"/>
    <property type="project" value="GO_Central"/>
</dbReference>
<dbReference type="GO" id="GO:0042840">
    <property type="term" value="P:D-glucuronate catabolic process"/>
    <property type="evidence" value="ECO:0000318"/>
    <property type="project" value="GO_Central"/>
</dbReference>
<dbReference type="GO" id="GO:0045490">
    <property type="term" value="P:pectin catabolic process"/>
    <property type="evidence" value="ECO:0007669"/>
    <property type="project" value="UniProtKB-UniRule"/>
</dbReference>
<dbReference type="CDD" id="cd20491">
    <property type="entry name" value="cupin_KduI_C"/>
    <property type="match status" value="1"/>
</dbReference>
<dbReference type="CDD" id="cd20294">
    <property type="entry name" value="cupin_KduI_N"/>
    <property type="match status" value="1"/>
</dbReference>
<dbReference type="FunFam" id="2.60.120.10:FF:000018">
    <property type="entry name" value="4-deoxy-L-threo-5-hexosulose-uronate ketol-isomerase"/>
    <property type="match status" value="1"/>
</dbReference>
<dbReference type="FunFam" id="2.60.120.520:FF:000001">
    <property type="entry name" value="4-deoxy-L-threo-5-hexosulose-uronate ketol-isomerase"/>
    <property type="match status" value="1"/>
</dbReference>
<dbReference type="Gene3D" id="2.60.120.10">
    <property type="entry name" value="Jelly Rolls"/>
    <property type="match status" value="1"/>
</dbReference>
<dbReference type="Gene3D" id="2.60.120.520">
    <property type="entry name" value="pectin degrading enzyme 5-keto 4- deoxyuronate isomerase, domain 1"/>
    <property type="match status" value="1"/>
</dbReference>
<dbReference type="HAMAP" id="MF_00687">
    <property type="entry name" value="KduI"/>
    <property type="match status" value="1"/>
</dbReference>
<dbReference type="InterPro" id="IPR007045">
    <property type="entry name" value="KduI"/>
</dbReference>
<dbReference type="InterPro" id="IPR021120">
    <property type="entry name" value="KduI/IolB_isomerase"/>
</dbReference>
<dbReference type="InterPro" id="IPR027449">
    <property type="entry name" value="KduI_N"/>
</dbReference>
<dbReference type="InterPro" id="IPR014710">
    <property type="entry name" value="RmlC-like_jellyroll"/>
</dbReference>
<dbReference type="InterPro" id="IPR011051">
    <property type="entry name" value="RmlC_Cupin_sf"/>
</dbReference>
<dbReference type="NCBIfam" id="NF002091">
    <property type="entry name" value="PRK00924.1"/>
    <property type="match status" value="1"/>
</dbReference>
<dbReference type="PANTHER" id="PTHR38461">
    <property type="entry name" value="4-DEOXY-L-THREO-5-HEXOSULOSE-URONATE KETOL-ISOMERASE"/>
    <property type="match status" value="1"/>
</dbReference>
<dbReference type="PANTHER" id="PTHR38461:SF1">
    <property type="entry name" value="4-DEOXY-L-THREO-5-HEXOSULOSE-URONATE KETOL-ISOMERASE"/>
    <property type="match status" value="1"/>
</dbReference>
<dbReference type="Pfam" id="PF04962">
    <property type="entry name" value="KduI"/>
    <property type="match status" value="1"/>
</dbReference>
<dbReference type="PIRSF" id="PIRSF006625">
    <property type="entry name" value="KduI"/>
    <property type="match status" value="1"/>
</dbReference>
<dbReference type="SUPFAM" id="SSF51182">
    <property type="entry name" value="RmlC-like cupins"/>
    <property type="match status" value="1"/>
</dbReference>
<gene>
    <name evidence="1" type="primary">kduI</name>
    <name type="ordered locus">YPO1725</name>
    <name type="ordered locus">y1887</name>
    <name type="ordered locus">YP_1750</name>
</gene>
<name>KDUI_YERPE</name>
<organism>
    <name type="scientific">Yersinia pestis</name>
    <dbReference type="NCBI Taxonomy" id="632"/>
    <lineage>
        <taxon>Bacteria</taxon>
        <taxon>Pseudomonadati</taxon>
        <taxon>Pseudomonadota</taxon>
        <taxon>Gammaproteobacteria</taxon>
        <taxon>Enterobacterales</taxon>
        <taxon>Yersiniaceae</taxon>
        <taxon>Yersinia</taxon>
    </lineage>
</organism>
<reference key="1">
    <citation type="journal article" date="2001" name="Nature">
        <title>Genome sequence of Yersinia pestis, the causative agent of plague.</title>
        <authorList>
            <person name="Parkhill J."/>
            <person name="Wren B.W."/>
            <person name="Thomson N.R."/>
            <person name="Titball R.W."/>
            <person name="Holden M.T.G."/>
            <person name="Prentice M.B."/>
            <person name="Sebaihia M."/>
            <person name="James K.D."/>
            <person name="Churcher C.M."/>
            <person name="Mungall K.L."/>
            <person name="Baker S."/>
            <person name="Basham D."/>
            <person name="Bentley S.D."/>
            <person name="Brooks K."/>
            <person name="Cerdeno-Tarraga A.-M."/>
            <person name="Chillingworth T."/>
            <person name="Cronin A."/>
            <person name="Davies R.M."/>
            <person name="Davis P."/>
            <person name="Dougan G."/>
            <person name="Feltwell T."/>
            <person name="Hamlin N."/>
            <person name="Holroyd S."/>
            <person name="Jagels K."/>
            <person name="Karlyshev A.V."/>
            <person name="Leather S."/>
            <person name="Moule S."/>
            <person name="Oyston P.C.F."/>
            <person name="Quail M.A."/>
            <person name="Rutherford K.M."/>
            <person name="Simmonds M."/>
            <person name="Skelton J."/>
            <person name="Stevens K."/>
            <person name="Whitehead S."/>
            <person name="Barrell B.G."/>
        </authorList>
    </citation>
    <scope>NUCLEOTIDE SEQUENCE [LARGE SCALE GENOMIC DNA]</scope>
    <source>
        <strain>CO-92 / Biovar Orientalis</strain>
    </source>
</reference>
<reference key="2">
    <citation type="journal article" date="2002" name="J. Bacteriol.">
        <title>Genome sequence of Yersinia pestis KIM.</title>
        <authorList>
            <person name="Deng W."/>
            <person name="Burland V."/>
            <person name="Plunkett G. III"/>
            <person name="Boutin A."/>
            <person name="Mayhew G.F."/>
            <person name="Liss P."/>
            <person name="Perna N.T."/>
            <person name="Rose D.J."/>
            <person name="Mau B."/>
            <person name="Zhou S."/>
            <person name="Schwartz D.C."/>
            <person name="Fetherston J.D."/>
            <person name="Lindler L.E."/>
            <person name="Brubaker R.R."/>
            <person name="Plano G.V."/>
            <person name="Straley S.C."/>
            <person name="McDonough K.A."/>
            <person name="Nilles M.L."/>
            <person name="Matson J.S."/>
            <person name="Blattner F.R."/>
            <person name="Perry R.D."/>
        </authorList>
    </citation>
    <scope>NUCLEOTIDE SEQUENCE [LARGE SCALE GENOMIC DNA]</scope>
    <source>
        <strain>KIM10+ / Biovar Mediaevalis</strain>
    </source>
</reference>
<reference key="3">
    <citation type="journal article" date="2004" name="DNA Res.">
        <title>Complete genome sequence of Yersinia pestis strain 91001, an isolate avirulent to humans.</title>
        <authorList>
            <person name="Song Y."/>
            <person name="Tong Z."/>
            <person name="Wang J."/>
            <person name="Wang L."/>
            <person name="Guo Z."/>
            <person name="Han Y."/>
            <person name="Zhang J."/>
            <person name="Pei D."/>
            <person name="Zhou D."/>
            <person name="Qin H."/>
            <person name="Pang X."/>
            <person name="Han Y."/>
            <person name="Zhai J."/>
            <person name="Li M."/>
            <person name="Cui B."/>
            <person name="Qi Z."/>
            <person name="Jin L."/>
            <person name="Dai R."/>
            <person name="Chen F."/>
            <person name="Li S."/>
            <person name="Ye C."/>
            <person name="Du Z."/>
            <person name="Lin W."/>
            <person name="Wang J."/>
            <person name="Yu J."/>
            <person name="Yang H."/>
            <person name="Wang J."/>
            <person name="Huang P."/>
            <person name="Yang R."/>
        </authorList>
    </citation>
    <scope>NUCLEOTIDE SEQUENCE [LARGE SCALE GENOMIC DNA]</scope>
    <source>
        <strain>91001 / Biovar Mediaevalis</strain>
    </source>
</reference>
<feature type="chain" id="PRO_0000215500" description="4-deoxy-L-threo-5-hexosulose-uronate ketol-isomerase">
    <location>
        <begin position="1"/>
        <end position="278"/>
    </location>
</feature>
<feature type="binding site" evidence="1">
    <location>
        <position position="196"/>
    </location>
    <ligand>
        <name>Zn(2+)</name>
        <dbReference type="ChEBI" id="CHEBI:29105"/>
    </ligand>
</feature>
<feature type="binding site" evidence="1">
    <location>
        <position position="198"/>
    </location>
    <ligand>
        <name>Zn(2+)</name>
        <dbReference type="ChEBI" id="CHEBI:29105"/>
    </ligand>
</feature>
<feature type="binding site" evidence="1">
    <location>
        <position position="203"/>
    </location>
    <ligand>
        <name>Zn(2+)</name>
        <dbReference type="ChEBI" id="CHEBI:29105"/>
    </ligand>
</feature>
<feature type="binding site" evidence="1">
    <location>
        <position position="245"/>
    </location>
    <ligand>
        <name>Zn(2+)</name>
        <dbReference type="ChEBI" id="CHEBI:29105"/>
    </ligand>
</feature>
<comment type="function">
    <text evidence="1">Catalyzes the isomerization of 5-dehydro-4-deoxy-D-glucuronate to 3-deoxy-D-glycero-2,5-hexodiulosonate.</text>
</comment>
<comment type="catalytic activity">
    <reaction evidence="1">
        <text>5-dehydro-4-deoxy-D-glucuronate = 3-deoxy-D-glycero-2,5-hexodiulosonate</text>
        <dbReference type="Rhea" id="RHEA:23896"/>
        <dbReference type="ChEBI" id="CHEBI:17117"/>
        <dbReference type="ChEBI" id="CHEBI:29071"/>
        <dbReference type="EC" id="5.3.1.17"/>
    </reaction>
</comment>
<comment type="cofactor">
    <cofactor evidence="1">
        <name>Zn(2+)</name>
        <dbReference type="ChEBI" id="CHEBI:29105"/>
    </cofactor>
    <text evidence="1">Binds 1 zinc ion per subunit.</text>
</comment>
<comment type="pathway">
    <text evidence="1">Glycan metabolism; pectin degradation; 2-dehydro-3-deoxy-D-gluconate from pectin: step 4/5.</text>
</comment>
<comment type="similarity">
    <text evidence="1">Belongs to the KduI family.</text>
</comment>
<evidence type="ECO:0000255" key="1">
    <source>
        <dbReference type="HAMAP-Rule" id="MF_00687"/>
    </source>
</evidence>
<protein>
    <recommendedName>
        <fullName evidence="1">4-deoxy-L-threo-5-hexosulose-uronate ketol-isomerase</fullName>
        <ecNumber evidence="1">5.3.1.17</ecNumber>
    </recommendedName>
    <alternativeName>
        <fullName evidence="1">5-keto-4-deoxyuronate isomerase</fullName>
    </alternativeName>
    <alternativeName>
        <fullName evidence="1">DKI isomerase</fullName>
    </alternativeName>
</protein>
<accession>Q8ZFH8</accession>
<accession>Q0WG60</accession>